<feature type="chain" id="PRO_1000077006" description="Queuine tRNA-ribosyltransferase">
    <location>
        <begin position="1"/>
        <end position="375"/>
    </location>
</feature>
<feature type="region of interest" description="RNA binding" evidence="1">
    <location>
        <begin position="249"/>
        <end position="255"/>
    </location>
</feature>
<feature type="region of interest" description="RNA binding; important for wobble base 34 recognition" evidence="1">
    <location>
        <begin position="273"/>
        <end position="277"/>
    </location>
</feature>
<feature type="active site" description="Proton acceptor" evidence="1">
    <location>
        <position position="93"/>
    </location>
</feature>
<feature type="active site" description="Nucleophile" evidence="1">
    <location>
        <position position="268"/>
    </location>
</feature>
<feature type="binding site" evidence="1">
    <location>
        <begin position="93"/>
        <end position="97"/>
    </location>
    <ligand>
        <name>substrate</name>
    </ligand>
</feature>
<feature type="binding site" evidence="1">
    <location>
        <position position="147"/>
    </location>
    <ligand>
        <name>substrate</name>
    </ligand>
</feature>
<feature type="binding site" evidence="1">
    <location>
        <position position="191"/>
    </location>
    <ligand>
        <name>substrate</name>
    </ligand>
</feature>
<feature type="binding site" evidence="1">
    <location>
        <position position="218"/>
    </location>
    <ligand>
        <name>substrate</name>
    </ligand>
</feature>
<feature type="binding site" evidence="1">
    <location>
        <position position="306"/>
    </location>
    <ligand>
        <name>Zn(2+)</name>
        <dbReference type="ChEBI" id="CHEBI:29105"/>
    </ligand>
</feature>
<feature type="binding site" evidence="1">
    <location>
        <position position="308"/>
    </location>
    <ligand>
        <name>Zn(2+)</name>
        <dbReference type="ChEBI" id="CHEBI:29105"/>
    </ligand>
</feature>
<feature type="binding site" evidence="1">
    <location>
        <position position="311"/>
    </location>
    <ligand>
        <name>Zn(2+)</name>
        <dbReference type="ChEBI" id="CHEBI:29105"/>
    </ligand>
</feature>
<feature type="binding site" evidence="1">
    <location>
        <position position="337"/>
    </location>
    <ligand>
        <name>Zn(2+)</name>
        <dbReference type="ChEBI" id="CHEBI:29105"/>
    </ligand>
</feature>
<evidence type="ECO:0000255" key="1">
    <source>
        <dbReference type="HAMAP-Rule" id="MF_00168"/>
    </source>
</evidence>
<comment type="function">
    <text evidence="1">Catalyzes the base-exchange of a guanine (G) residue with the queuine precursor 7-aminomethyl-7-deazaguanine (PreQ1) at position 34 (anticodon wobble position) in tRNAs with GU(N) anticodons (tRNA-Asp, -Asn, -His and -Tyr). Catalysis occurs through a double-displacement mechanism. The nucleophile active site attacks the C1' of nucleotide 34 to detach the guanine base from the RNA, forming a covalent enzyme-RNA intermediate. The proton acceptor active site deprotonates the incoming PreQ1, allowing a nucleophilic attack on the C1' of the ribose to form the product. After dissociation, two additional enzymatic reactions on the tRNA convert PreQ1 to queuine (Q), resulting in the hypermodified nucleoside queuosine (7-(((4,5-cis-dihydroxy-2-cyclopenten-1-yl)amino)methyl)-7-deazaguanosine).</text>
</comment>
<comment type="catalytic activity">
    <reaction evidence="1">
        <text>7-aminomethyl-7-carbaguanine + guanosine(34) in tRNA = 7-aminomethyl-7-carbaguanosine(34) in tRNA + guanine</text>
        <dbReference type="Rhea" id="RHEA:24104"/>
        <dbReference type="Rhea" id="RHEA-COMP:10341"/>
        <dbReference type="Rhea" id="RHEA-COMP:10342"/>
        <dbReference type="ChEBI" id="CHEBI:16235"/>
        <dbReference type="ChEBI" id="CHEBI:58703"/>
        <dbReference type="ChEBI" id="CHEBI:74269"/>
        <dbReference type="ChEBI" id="CHEBI:82833"/>
        <dbReference type="EC" id="2.4.2.29"/>
    </reaction>
</comment>
<comment type="cofactor">
    <cofactor evidence="1">
        <name>Zn(2+)</name>
        <dbReference type="ChEBI" id="CHEBI:29105"/>
    </cofactor>
    <text evidence="1">Binds 1 zinc ion per subunit.</text>
</comment>
<comment type="pathway">
    <text evidence="1">tRNA modification; tRNA-queuosine biosynthesis.</text>
</comment>
<comment type="subunit">
    <text evidence="1">Homodimer. Within each dimer, one monomer is responsible for RNA recognition and catalysis, while the other monomer binds to the replacement base PreQ1.</text>
</comment>
<comment type="similarity">
    <text evidence="1">Belongs to the queuine tRNA-ribosyltransferase family.</text>
</comment>
<keyword id="KW-0328">Glycosyltransferase</keyword>
<keyword id="KW-0479">Metal-binding</keyword>
<keyword id="KW-0671">Queuosine biosynthesis</keyword>
<keyword id="KW-0808">Transferase</keyword>
<keyword id="KW-0819">tRNA processing</keyword>
<keyword id="KW-0862">Zinc</keyword>
<gene>
    <name evidence="1" type="primary">tgt</name>
    <name type="ordered locus">Dvul_2243</name>
</gene>
<reference key="1">
    <citation type="journal article" date="2009" name="Environ. Microbiol.">
        <title>Contribution of mobile genetic elements to Desulfovibrio vulgaris genome plasticity.</title>
        <authorList>
            <person name="Walker C.B."/>
            <person name="Stolyar S."/>
            <person name="Chivian D."/>
            <person name="Pinel N."/>
            <person name="Gabster J.A."/>
            <person name="Dehal P.S."/>
            <person name="He Z."/>
            <person name="Yang Z.K."/>
            <person name="Yen H.C."/>
            <person name="Zhou J."/>
            <person name="Wall J.D."/>
            <person name="Hazen T.C."/>
            <person name="Arkin A.P."/>
            <person name="Stahl D.A."/>
        </authorList>
    </citation>
    <scope>NUCLEOTIDE SEQUENCE [LARGE SCALE GENOMIC DNA]</scope>
    <source>
        <strain>DP4</strain>
    </source>
</reference>
<protein>
    <recommendedName>
        <fullName evidence="1">Queuine tRNA-ribosyltransferase</fullName>
        <ecNumber evidence="1">2.4.2.29</ecNumber>
    </recommendedName>
    <alternativeName>
        <fullName evidence="1">Guanine insertion enzyme</fullName>
    </alternativeName>
    <alternativeName>
        <fullName evidence="1">tRNA-guanine transglycosylase</fullName>
    </alternativeName>
</protein>
<organism>
    <name type="scientific">Nitratidesulfovibrio vulgaris (strain DP4)</name>
    <name type="common">Desulfovibrio vulgaris</name>
    <dbReference type="NCBI Taxonomy" id="391774"/>
    <lineage>
        <taxon>Bacteria</taxon>
        <taxon>Pseudomonadati</taxon>
        <taxon>Thermodesulfobacteriota</taxon>
        <taxon>Desulfovibrionia</taxon>
        <taxon>Desulfovibrionales</taxon>
        <taxon>Desulfovibrionaceae</taxon>
        <taxon>Nitratidesulfovibrio</taxon>
    </lineage>
</organism>
<name>TGT_NITV4</name>
<proteinExistence type="inferred from homology"/>
<accession>A1VFP3</accession>
<sequence>MTTPGTFEIHATDGAARTGCLHTAHGIVRTPIFMPVGTVGSVKAIAPDDLEAIGAEIILGNTYHLYLRPGDELVARRGGLHEFNAWRKPILTDSGGFQVFSLSGLRRIAEEGVEFRSHLDGSKHLFTPEKVVSIQRNLNSDIMMVLDECVPYGADRTYTEKSVGLTTRWAKRCRDAYPKGAAGNLLFGITQGGFFKDLRTRSIGELTDIDFDGFALGGLSVGEPKAEMMDLLYHSAPLLPADKPRYLMGVGTPLDIINGIAAGVDMFDCVLPTRNARNGTLYTSLGKLNIKRREFAEDDGPLDPACSCYTCRTFSRAYLRHLYTAKELLAFRLNSIHNLTYFLDLVRGARAAIAAGRFAEYKRSFEAIYPEEVVA</sequence>
<dbReference type="EC" id="2.4.2.29" evidence="1"/>
<dbReference type="EMBL" id="CP000527">
    <property type="protein sequence ID" value="ABM29259.1"/>
    <property type="molecule type" value="Genomic_DNA"/>
</dbReference>
<dbReference type="RefSeq" id="WP_011792740.1">
    <property type="nucleotide sequence ID" value="NC_008751.1"/>
</dbReference>
<dbReference type="SMR" id="A1VFP3"/>
<dbReference type="KEGG" id="dvl:Dvul_2243"/>
<dbReference type="HOGENOM" id="CLU_022060_0_1_7"/>
<dbReference type="UniPathway" id="UPA00392"/>
<dbReference type="Proteomes" id="UP000009173">
    <property type="component" value="Chromosome"/>
</dbReference>
<dbReference type="GO" id="GO:0005829">
    <property type="term" value="C:cytosol"/>
    <property type="evidence" value="ECO:0007669"/>
    <property type="project" value="TreeGrafter"/>
</dbReference>
<dbReference type="GO" id="GO:0046872">
    <property type="term" value="F:metal ion binding"/>
    <property type="evidence" value="ECO:0007669"/>
    <property type="project" value="UniProtKB-KW"/>
</dbReference>
<dbReference type="GO" id="GO:0008479">
    <property type="term" value="F:tRNA-guanosine(34) queuine transglycosylase activity"/>
    <property type="evidence" value="ECO:0007669"/>
    <property type="project" value="UniProtKB-UniRule"/>
</dbReference>
<dbReference type="GO" id="GO:0008616">
    <property type="term" value="P:queuosine biosynthetic process"/>
    <property type="evidence" value="ECO:0007669"/>
    <property type="project" value="UniProtKB-UniRule"/>
</dbReference>
<dbReference type="GO" id="GO:0002099">
    <property type="term" value="P:tRNA wobble guanine modification"/>
    <property type="evidence" value="ECO:0007669"/>
    <property type="project" value="TreeGrafter"/>
</dbReference>
<dbReference type="GO" id="GO:0101030">
    <property type="term" value="P:tRNA-guanine transglycosylation"/>
    <property type="evidence" value="ECO:0007669"/>
    <property type="project" value="InterPro"/>
</dbReference>
<dbReference type="FunFam" id="3.20.20.105:FF:000001">
    <property type="entry name" value="Queuine tRNA-ribosyltransferase"/>
    <property type="match status" value="1"/>
</dbReference>
<dbReference type="Gene3D" id="3.20.20.105">
    <property type="entry name" value="Queuine tRNA-ribosyltransferase-like"/>
    <property type="match status" value="1"/>
</dbReference>
<dbReference type="HAMAP" id="MF_00168">
    <property type="entry name" value="Q_tRNA_Tgt"/>
    <property type="match status" value="1"/>
</dbReference>
<dbReference type="InterPro" id="IPR050076">
    <property type="entry name" value="ArchSynthase1/Queuine_TRR"/>
</dbReference>
<dbReference type="InterPro" id="IPR004803">
    <property type="entry name" value="TGT"/>
</dbReference>
<dbReference type="InterPro" id="IPR036511">
    <property type="entry name" value="TGT-like_sf"/>
</dbReference>
<dbReference type="InterPro" id="IPR002616">
    <property type="entry name" value="tRNA_ribo_trans-like"/>
</dbReference>
<dbReference type="NCBIfam" id="TIGR00430">
    <property type="entry name" value="Q_tRNA_tgt"/>
    <property type="match status" value="1"/>
</dbReference>
<dbReference type="NCBIfam" id="TIGR00449">
    <property type="entry name" value="tgt_general"/>
    <property type="match status" value="1"/>
</dbReference>
<dbReference type="PANTHER" id="PTHR46499">
    <property type="entry name" value="QUEUINE TRNA-RIBOSYLTRANSFERASE"/>
    <property type="match status" value="1"/>
</dbReference>
<dbReference type="PANTHER" id="PTHR46499:SF1">
    <property type="entry name" value="QUEUINE TRNA-RIBOSYLTRANSFERASE"/>
    <property type="match status" value="1"/>
</dbReference>
<dbReference type="Pfam" id="PF01702">
    <property type="entry name" value="TGT"/>
    <property type="match status" value="1"/>
</dbReference>
<dbReference type="SUPFAM" id="SSF51713">
    <property type="entry name" value="tRNA-guanine transglycosylase"/>
    <property type="match status" value="1"/>
</dbReference>